<accession>P23425</accession>
<protein>
    <recommendedName>
        <fullName>Gag polyprotein</fullName>
    </recommendedName>
    <component>
        <recommendedName>
            <fullName>Matrix protein p16</fullName>
        </recommendedName>
    </component>
    <component>
        <recommendedName>
            <fullName>Capsid protein p25</fullName>
        </recommendedName>
    </component>
    <component>
        <recommendedName>
            <fullName>Nucleocapsid protein p14</fullName>
        </recommendedName>
    </component>
</protein>
<keyword id="KW-0167">Capsid protein</keyword>
<keyword id="KW-0945">Host-virus interaction</keyword>
<keyword id="KW-0479">Metal-binding</keyword>
<keyword id="KW-0677">Repeat</keyword>
<keyword id="KW-0688">Ribosomal frameshifting</keyword>
<keyword id="KW-1198">Viral budding</keyword>
<keyword id="KW-1187">Viral budding via the host ESCRT complexes</keyword>
<keyword id="KW-1188">Viral release from host cell</keyword>
<keyword id="KW-0946">Virion</keyword>
<keyword id="KW-0862">Zinc</keyword>
<keyword id="KW-0863">Zinc-finger</keyword>
<reference key="1">
    <citation type="journal article" date="1991" name="Virology">
        <title>Isolation of replication-competent molecular clones of visna virus.</title>
        <authorList>
            <person name="Staskus K.A."/>
            <person name="Retzel E.F."/>
            <person name="Lewis E.D."/>
            <person name="Wietgrefe S.W."/>
            <person name="Silsby J.L."/>
            <person name="Cyr S."/>
            <person name="Rank J.M."/>
            <person name="Haase A.T."/>
            <person name="Fast D."/>
            <person name="Geiser P.T."/>
            <person name="Harty J.T."/>
            <person name="Kong S.H."/>
            <person name="Cook R."/>
            <person name="Lahti C.J."/>
            <person name="Neufeld T.P."/>
            <person name="Porter T.E."/>
            <person name="Shoop E."/>
            <person name="Zachow K.R."/>
        </authorList>
    </citation>
    <scope>NUCLEOTIDE SEQUENCE [GENOMIC DNA]</scope>
</reference>
<proteinExistence type="inferred from homology"/>
<organism>
    <name type="scientific">Maedi visna virus (strain 1514 / clone LV1-1KS2)</name>
    <name type="common">MVV</name>
    <name type="synonym">Visna lentivirus</name>
    <dbReference type="NCBI Taxonomy" id="11744"/>
    <lineage>
        <taxon>Viruses</taxon>
        <taxon>Riboviria</taxon>
        <taxon>Pararnavirae</taxon>
        <taxon>Artverviricota</taxon>
        <taxon>Revtraviricetes</taxon>
        <taxon>Ortervirales</taxon>
        <taxon>Retroviridae</taxon>
        <taxon>Orthoretrovirinae</taxon>
        <taxon>Lentivirus</taxon>
        <taxon>Visna-maedi virus</taxon>
    </lineage>
</organism>
<organismHost>
    <name type="scientific">Ovis aries</name>
    <name type="common">Sheep</name>
    <dbReference type="NCBI Taxonomy" id="9940"/>
</organismHost>
<dbReference type="EMBL" id="M60610">
    <property type="protein sequence ID" value="AAA17528.1"/>
    <property type="status" value="ALT_INIT"/>
    <property type="molecule type" value="Unassigned_DNA"/>
</dbReference>
<dbReference type="SMR" id="P23425"/>
<dbReference type="TCDB" id="1.G.7.1.1">
    <property type="family name" value="the reovirus fast fusion protein (r-fast) family"/>
</dbReference>
<dbReference type="GO" id="GO:0019028">
    <property type="term" value="C:viral capsid"/>
    <property type="evidence" value="ECO:0007669"/>
    <property type="project" value="UniProtKB-KW"/>
</dbReference>
<dbReference type="GO" id="GO:0003676">
    <property type="term" value="F:nucleic acid binding"/>
    <property type="evidence" value="ECO:0007669"/>
    <property type="project" value="InterPro"/>
</dbReference>
<dbReference type="GO" id="GO:0008270">
    <property type="term" value="F:zinc ion binding"/>
    <property type="evidence" value="ECO:0007669"/>
    <property type="project" value="UniProtKB-KW"/>
</dbReference>
<dbReference type="GO" id="GO:0039702">
    <property type="term" value="P:viral budding via host ESCRT complex"/>
    <property type="evidence" value="ECO:0007669"/>
    <property type="project" value="UniProtKB-KW"/>
</dbReference>
<dbReference type="GO" id="GO:0075523">
    <property type="term" value="P:viral translational frameshifting"/>
    <property type="evidence" value="ECO:0007669"/>
    <property type="project" value="UniProtKB-KW"/>
</dbReference>
<dbReference type="Gene3D" id="1.10.1200.30">
    <property type="match status" value="1"/>
</dbReference>
<dbReference type="Gene3D" id="1.10.375.10">
    <property type="entry name" value="Human Immunodeficiency Virus Type 1 Capsid Protein"/>
    <property type="match status" value="1"/>
</dbReference>
<dbReference type="Gene3D" id="4.10.60.10">
    <property type="entry name" value="Zinc finger, CCHC-type"/>
    <property type="match status" value="1"/>
</dbReference>
<dbReference type="InterPro" id="IPR045345">
    <property type="entry name" value="Gag_p24_C"/>
</dbReference>
<dbReference type="InterPro" id="IPR050195">
    <property type="entry name" value="Primate_lentivir_Gag_pol-like"/>
</dbReference>
<dbReference type="InterPro" id="IPR008916">
    <property type="entry name" value="Retrov_capsid_C"/>
</dbReference>
<dbReference type="InterPro" id="IPR008919">
    <property type="entry name" value="Retrov_capsid_N"/>
</dbReference>
<dbReference type="InterPro" id="IPR001878">
    <property type="entry name" value="Znf_CCHC"/>
</dbReference>
<dbReference type="InterPro" id="IPR036875">
    <property type="entry name" value="Znf_CCHC_sf"/>
</dbReference>
<dbReference type="PANTHER" id="PTHR40389">
    <property type="entry name" value="ENDOGENOUS RETROVIRUS GROUP K MEMBER 24 GAG POLYPROTEIN-RELATED"/>
    <property type="match status" value="1"/>
</dbReference>
<dbReference type="PANTHER" id="PTHR40389:SF3">
    <property type="entry name" value="IGE-BINDING PROTEIN"/>
    <property type="match status" value="1"/>
</dbReference>
<dbReference type="Pfam" id="PF00607">
    <property type="entry name" value="Gag_p24"/>
    <property type="match status" value="1"/>
</dbReference>
<dbReference type="Pfam" id="PF19317">
    <property type="entry name" value="Gag_p24_C"/>
    <property type="match status" value="1"/>
</dbReference>
<dbReference type="Pfam" id="PF00098">
    <property type="entry name" value="zf-CCHC"/>
    <property type="match status" value="2"/>
</dbReference>
<dbReference type="SMART" id="SM00343">
    <property type="entry name" value="ZnF_C2HC"/>
    <property type="match status" value="2"/>
</dbReference>
<dbReference type="SUPFAM" id="SSF47353">
    <property type="entry name" value="Retrovirus capsid dimerization domain-like"/>
    <property type="match status" value="1"/>
</dbReference>
<dbReference type="SUPFAM" id="SSF47943">
    <property type="entry name" value="Retrovirus capsid protein, N-terminal core domain"/>
    <property type="match status" value="1"/>
</dbReference>
<dbReference type="SUPFAM" id="SSF57756">
    <property type="entry name" value="Retrovirus zinc finger-like domains"/>
    <property type="match status" value="1"/>
</dbReference>
<dbReference type="PROSITE" id="PS50158">
    <property type="entry name" value="ZF_CCHC"/>
    <property type="match status" value="2"/>
</dbReference>
<evidence type="ECO:0000250" key="1">
    <source>
        <dbReference type="UniProtKB" id="P04585"/>
    </source>
</evidence>
<evidence type="ECO:0000250" key="2">
    <source>
        <dbReference type="UniProtKB" id="P12497"/>
    </source>
</evidence>
<evidence type="ECO:0000250" key="3">
    <source>
        <dbReference type="UniProtKB" id="P35955"/>
    </source>
</evidence>
<evidence type="ECO:0000250" key="4">
    <source>
        <dbReference type="UniProtKB" id="P35956"/>
    </source>
</evidence>
<evidence type="ECO:0000255" key="5">
    <source>
        <dbReference type="PROSITE-ProRule" id="PRU00047"/>
    </source>
</evidence>
<evidence type="ECO:0000256" key="6">
    <source>
        <dbReference type="SAM" id="MobiDB-lite"/>
    </source>
</evidence>
<evidence type="ECO:0000305" key="7"/>
<name>GAG_VILV2</name>
<feature type="chain" id="PRO_0000443357" description="Gag polyprotein">
    <location>
        <begin position="1"/>
        <end position="442"/>
    </location>
</feature>
<feature type="chain" id="PRO_0000038805" description="Matrix protein p16">
    <location>
        <begin position="1"/>
        <end position="143"/>
    </location>
</feature>
<feature type="chain" id="PRO_0000038806" description="Capsid protein p25">
    <location>
        <begin position="144"/>
        <end position="363"/>
    </location>
</feature>
<feature type="chain" id="PRO_0000038807" description="Nucleocapsid protein p14">
    <location>
        <begin position="364"/>
        <end position="442"/>
    </location>
</feature>
<feature type="zinc finger region" description="CCHC-type 1" evidence="5">
    <location>
        <begin position="385"/>
        <end position="402"/>
    </location>
</feature>
<feature type="zinc finger region" description="CCHC-type 2" evidence="5">
    <location>
        <begin position="404"/>
        <end position="421"/>
    </location>
</feature>
<feature type="region of interest" description="Disordered" evidence="6">
    <location>
        <begin position="420"/>
        <end position="442"/>
    </location>
</feature>
<feature type="short sequence motif" description="PTAP/PSAP motif">
    <location>
        <begin position="436"/>
        <end position="439"/>
    </location>
</feature>
<feature type="site" description="Cleavage; by viral protease" evidence="3">
    <location>
        <begin position="363"/>
        <end position="364"/>
    </location>
</feature>
<gene>
    <name type="primary">gag</name>
</gene>
<comment type="function">
    <molecule>Gag polyprotein</molecule>
    <text evidence="1">Mediates, with Gag-Pol polyprotein, the essential events in virion assembly, including binding the plasma membrane, making the protein-protein interactions necessary to create spherical particles, recruiting the viral Env proteins, and packaging the genomic RNA via direct interactions with the RNA packaging sequence.</text>
</comment>
<comment type="function">
    <molecule>Matrix protein p16</molecule>
    <text evidence="2">Targets the polyprotein to the plasma membrane.</text>
</comment>
<comment type="function">
    <molecule>Capsid protein p25</molecule>
    <text evidence="1">Forms the core that encapsulates the genomic RNA-nucleocapsid complex in the virion.</text>
</comment>
<comment type="function">
    <molecule>Nucleocapsid protein p14</molecule>
    <text evidence="1">Encapsulates and protects viral dimeric unspliced genomic RNA (gRNA). Binds these RNAs through its zinc fingers. Acts as a nucleic acid chaperone which is involved in rearrangement of nucleic acid secondary structure during gRNA retrotranscription. Also facilitates template switch leading to recombination.</text>
</comment>
<comment type="subcellular location">
    <molecule>Matrix protein p16</molecule>
    <subcellularLocation>
        <location evidence="7">Virion</location>
    </subcellularLocation>
</comment>
<comment type="subcellular location">
    <molecule>Capsid protein p25</molecule>
    <subcellularLocation>
        <location evidence="7">Virion</location>
    </subcellularLocation>
</comment>
<comment type="subcellular location">
    <molecule>Nucleocapsid protein p14</molecule>
    <subcellularLocation>
        <location evidence="7">Virion</location>
    </subcellularLocation>
</comment>
<comment type="alternative products">
    <event type="ribosomal frameshifting"/>
    <isoform>
        <id>P23425-1</id>
        <name>Gag polyprotein</name>
        <sequence type="displayed"/>
    </isoform>
    <isoform>
        <id>P23427-1</id>
        <name>Gag-Pol polyprotein</name>
        <sequence type="external"/>
    </isoform>
</comment>
<comment type="domain">
    <text evidence="7">Late-budding domains (L domains) are short sequence motifs essential for viral particle budding. They recruit proteins of the host ESCRT machinery (Endosomal Sorting Complex Required for Transport) or ESCRT-associated proteins. Nucleocapsid protein p14 contains one L domain: a PTAP/PSAP motif, which interacts with the UEV domain of TSG101.</text>
</comment>
<comment type="PTM">
    <molecule>Gag polyprotein</molecule>
    <text evidence="7">Specific enzymatic cleavages by the viral protease yield mature proteins.</text>
</comment>
<comment type="miscellaneous">
    <molecule>Isoform Gag polyprotein</molecule>
    <text evidence="4">Produced by conventional translation.</text>
</comment>
<comment type="similarity">
    <text evidence="7">Belongs to the Ovine/caprine lentivirus group gag polyprotein family.</text>
</comment>
<comment type="sequence caution" evidence="7">
    <conflict type="erroneous initiation">
        <sequence resource="EMBL-CDS" id="AAA17528"/>
    </conflict>
    <text>Extended N-terminus.</text>
</comment>
<sequence length="442" mass="49915">MAKQGSKEKKGYPELKEVIKATCKIRVGPGKETLTEGNCLWALKTIDFIFEDLKTEPWTITKMYTVWDRLKGLTPEETSKREFASLQATLACIMCSQMGMKPETVQAAKGIISMKEGLQENKEAKGEKVEQLYPNLEKHREVYPIVNLQAGGRSWKAVESVVFQQLQTVAMQHGLVSEDFERQLAYYATTWTSKDILEVLVMMPGNRAQKELIQGKLNEEAERWVRQNPPGPNVLTVDQIMGVGQTNQQASQANMDQARQICLQWVITALRSVRHMSHRPGNPMLVKQKNTESYEDFIARLLEAIDAEPVMDPIKTYLKVTLSYTNASTDCQKQMDRTLGTRVQQATVEEKMQACRDVGSEGFKMQLLAQALRPQGKAGHKGVNQKCYNCGKPGHLARQCRQGIICHHCGKRGHMQKDCRQKKQQGNNRRGPRVVPSAPPML</sequence>